<name>RSMC_SHELP</name>
<keyword id="KW-0963">Cytoplasm</keyword>
<keyword id="KW-0489">Methyltransferase</keyword>
<keyword id="KW-1185">Reference proteome</keyword>
<keyword id="KW-0698">rRNA processing</keyword>
<keyword id="KW-0949">S-adenosyl-L-methionine</keyword>
<keyword id="KW-0808">Transferase</keyword>
<sequence>MLSNPSQVVLRNIELFESKNVLLINHECDLLATALLEDAAKVTTLALDFNHFQRIKSHENARLQCHFGHQLPSTQTFDAVVLFYPKSKSLAPYLLNLAGRHLIPGGELVIVGEKKGGIRSITKQLPDYFDGGIKLDNARHCMLYSSSLLSEAPEIKLSDWVKDYVLSTPQGELTICNLVGVFSEKRLDEGTELLLEHLPTLKGRVLDFGCGAGVITAALLKANPDLELECVDINAMALASCELTLAANGMQAKVYASDGLTQTQGMFDAIISNPPFHDGLDSTTEIATRFVQESEAQLKSGGIFQIVANRHLPYSDTIAKFFKTVNVAAENNKYKIYANRKA</sequence>
<dbReference type="EC" id="2.1.1.172" evidence="1"/>
<dbReference type="EMBL" id="CP000606">
    <property type="protein sequence ID" value="ABO25096.1"/>
    <property type="molecule type" value="Genomic_DNA"/>
</dbReference>
<dbReference type="RefSeq" id="WP_011867026.1">
    <property type="nucleotide sequence ID" value="NC_009092.1"/>
</dbReference>
<dbReference type="SMR" id="A3QHZ8"/>
<dbReference type="STRING" id="323850.Shew_3230"/>
<dbReference type="KEGG" id="slo:Shew_3230"/>
<dbReference type="eggNOG" id="COG2813">
    <property type="taxonomic scope" value="Bacteria"/>
</dbReference>
<dbReference type="HOGENOM" id="CLU_049581_0_1_6"/>
<dbReference type="OrthoDB" id="9816072at2"/>
<dbReference type="Proteomes" id="UP000001558">
    <property type="component" value="Chromosome"/>
</dbReference>
<dbReference type="GO" id="GO:0005737">
    <property type="term" value="C:cytoplasm"/>
    <property type="evidence" value="ECO:0007669"/>
    <property type="project" value="UniProtKB-SubCell"/>
</dbReference>
<dbReference type="GO" id="GO:0052914">
    <property type="term" value="F:16S rRNA (guanine(1207)-N(2))-methyltransferase activity"/>
    <property type="evidence" value="ECO:0007669"/>
    <property type="project" value="UniProtKB-EC"/>
</dbReference>
<dbReference type="GO" id="GO:0003676">
    <property type="term" value="F:nucleic acid binding"/>
    <property type="evidence" value="ECO:0007669"/>
    <property type="project" value="InterPro"/>
</dbReference>
<dbReference type="CDD" id="cd02440">
    <property type="entry name" value="AdoMet_MTases"/>
    <property type="match status" value="1"/>
</dbReference>
<dbReference type="Gene3D" id="3.40.50.150">
    <property type="entry name" value="Vaccinia Virus protein VP39"/>
    <property type="match status" value="2"/>
</dbReference>
<dbReference type="HAMAP" id="MF_01862">
    <property type="entry name" value="16SrRNA_methyltr_C"/>
    <property type="match status" value="1"/>
</dbReference>
<dbReference type="InterPro" id="IPR002052">
    <property type="entry name" value="DNA_methylase_N6_adenine_CS"/>
</dbReference>
<dbReference type="InterPro" id="IPR013675">
    <property type="entry name" value="Mtase_sm_N"/>
</dbReference>
<dbReference type="InterPro" id="IPR023543">
    <property type="entry name" value="rRNA_ssu_MeTfrase_C"/>
</dbReference>
<dbReference type="InterPro" id="IPR046977">
    <property type="entry name" value="RsmC/RlmG"/>
</dbReference>
<dbReference type="InterPro" id="IPR029063">
    <property type="entry name" value="SAM-dependent_MTases_sf"/>
</dbReference>
<dbReference type="InterPro" id="IPR007848">
    <property type="entry name" value="Small_mtfrase_dom"/>
</dbReference>
<dbReference type="PANTHER" id="PTHR47816">
    <property type="entry name" value="RIBOSOMAL RNA SMALL SUBUNIT METHYLTRANSFERASE C"/>
    <property type="match status" value="1"/>
</dbReference>
<dbReference type="PANTHER" id="PTHR47816:SF4">
    <property type="entry name" value="RIBOSOMAL RNA SMALL SUBUNIT METHYLTRANSFERASE C"/>
    <property type="match status" value="1"/>
</dbReference>
<dbReference type="Pfam" id="PF05175">
    <property type="entry name" value="MTS"/>
    <property type="match status" value="1"/>
</dbReference>
<dbReference type="Pfam" id="PF08468">
    <property type="entry name" value="MTS_N"/>
    <property type="match status" value="1"/>
</dbReference>
<dbReference type="SUPFAM" id="SSF53335">
    <property type="entry name" value="S-adenosyl-L-methionine-dependent methyltransferases"/>
    <property type="match status" value="2"/>
</dbReference>
<protein>
    <recommendedName>
        <fullName evidence="1">Ribosomal RNA small subunit methyltransferase C</fullName>
        <ecNumber evidence="1">2.1.1.172</ecNumber>
    </recommendedName>
    <alternativeName>
        <fullName evidence="1">16S rRNA m2G1207 methyltransferase</fullName>
    </alternativeName>
    <alternativeName>
        <fullName evidence="1">rRNA (guanine-N(2)-)-methyltransferase RsmC</fullName>
    </alternativeName>
</protein>
<feature type="chain" id="PRO_0000369773" description="Ribosomal RNA small subunit methyltransferase C">
    <location>
        <begin position="1"/>
        <end position="342"/>
    </location>
</feature>
<comment type="function">
    <text evidence="1">Specifically methylates the guanine in position 1207 of 16S rRNA in the 30S particle.</text>
</comment>
<comment type="catalytic activity">
    <reaction evidence="1">
        <text>guanosine(1207) in 16S rRNA + S-adenosyl-L-methionine = N(2)-methylguanosine(1207) in 16S rRNA + S-adenosyl-L-homocysteine + H(+)</text>
        <dbReference type="Rhea" id="RHEA:42736"/>
        <dbReference type="Rhea" id="RHEA-COMP:10213"/>
        <dbReference type="Rhea" id="RHEA-COMP:10214"/>
        <dbReference type="ChEBI" id="CHEBI:15378"/>
        <dbReference type="ChEBI" id="CHEBI:57856"/>
        <dbReference type="ChEBI" id="CHEBI:59789"/>
        <dbReference type="ChEBI" id="CHEBI:74269"/>
        <dbReference type="ChEBI" id="CHEBI:74481"/>
        <dbReference type="EC" id="2.1.1.172"/>
    </reaction>
</comment>
<comment type="subunit">
    <text evidence="1">Monomer.</text>
</comment>
<comment type="subcellular location">
    <subcellularLocation>
        <location evidence="1">Cytoplasm</location>
    </subcellularLocation>
</comment>
<comment type="similarity">
    <text evidence="1">Belongs to the methyltransferase superfamily. RsmC family.</text>
</comment>
<accession>A3QHZ8</accession>
<reference key="1">
    <citation type="submission" date="2007-03" db="EMBL/GenBank/DDBJ databases">
        <title>Complete sequence of Shewanella loihica PV-4.</title>
        <authorList>
            <consortium name="US DOE Joint Genome Institute"/>
            <person name="Copeland A."/>
            <person name="Lucas S."/>
            <person name="Lapidus A."/>
            <person name="Barry K."/>
            <person name="Detter J.C."/>
            <person name="Glavina del Rio T."/>
            <person name="Hammon N."/>
            <person name="Israni S."/>
            <person name="Dalin E."/>
            <person name="Tice H."/>
            <person name="Pitluck S."/>
            <person name="Chain P."/>
            <person name="Malfatti S."/>
            <person name="Shin M."/>
            <person name="Vergez L."/>
            <person name="Schmutz J."/>
            <person name="Larimer F."/>
            <person name="Land M."/>
            <person name="Hauser L."/>
            <person name="Kyrpides N."/>
            <person name="Mikhailova N."/>
            <person name="Romine M.F."/>
            <person name="Serres G."/>
            <person name="Fredrickson J."/>
            <person name="Tiedje J."/>
            <person name="Richardson P."/>
        </authorList>
    </citation>
    <scope>NUCLEOTIDE SEQUENCE [LARGE SCALE GENOMIC DNA]</scope>
    <source>
        <strain>ATCC BAA-1088 / PV-4</strain>
    </source>
</reference>
<organism>
    <name type="scientific">Shewanella loihica (strain ATCC BAA-1088 / PV-4)</name>
    <dbReference type="NCBI Taxonomy" id="323850"/>
    <lineage>
        <taxon>Bacteria</taxon>
        <taxon>Pseudomonadati</taxon>
        <taxon>Pseudomonadota</taxon>
        <taxon>Gammaproteobacteria</taxon>
        <taxon>Alteromonadales</taxon>
        <taxon>Shewanellaceae</taxon>
        <taxon>Shewanella</taxon>
    </lineage>
</organism>
<gene>
    <name evidence="1" type="primary">rsmC</name>
    <name type="ordered locus">Shew_3230</name>
</gene>
<evidence type="ECO:0000255" key="1">
    <source>
        <dbReference type="HAMAP-Rule" id="MF_01862"/>
    </source>
</evidence>
<proteinExistence type="inferred from homology"/>